<reference key="1">
    <citation type="journal article" date="1992" name="Science">
        <title>Syntaxin: a synaptic protein implicated in docking of synaptic vesicles at presynaptic active zones.</title>
        <authorList>
            <person name="Bennett M.K."/>
            <person name="Calakos N."/>
            <person name="Scheller R.H."/>
        </authorList>
    </citation>
    <scope>NUCLEOTIDE SEQUENCE [MRNA]</scope>
    <scope>PROTEIN SEQUENCE OF 1-16 AND 31-55</scope>
    <source>
        <tissue>Brain</tissue>
    </source>
</reference>
<reference key="2">
    <citation type="journal article" date="1993" name="Cell">
        <title>The syntaxin family of vesicular transport receptors.</title>
        <authorList>
            <person name="Bennett M.K."/>
            <person name="Garcia-Arraras J.E."/>
            <person name="Elferink L.A."/>
            <person name="Peterson K.E."/>
            <person name="Fleming A.M."/>
            <person name="Hazuka C.D."/>
            <person name="Scheller R.H."/>
        </authorList>
    </citation>
    <scope>NUCLEOTIDE SEQUENCE [MRNA]</scope>
</reference>
<reference key="3">
    <citation type="submission" date="2007-09" db="UniProtKB">
        <authorList>
            <person name="Lubec G."/>
            <person name="Kang S.U."/>
            <person name="Lubec S."/>
        </authorList>
    </citation>
    <scope>PROTEIN SEQUENCE OF 189-197; 204-209 AND 232-245</scope>
    <scope>IDENTIFICATION BY MASS SPECTROMETRY</scope>
    <source>
        <strain>Sprague-Dawley</strain>
        <tissue>Brain</tissue>
    </source>
</reference>
<reference key="4">
    <citation type="journal article" date="1993" name="EMBO J.">
        <title>Botulinum neurotoxin C1 blocks neurotransmitter release by means of cleaving HPC-1/syntaxin.</title>
        <authorList>
            <person name="Blasi J."/>
            <person name="Chapman E.R."/>
            <person name="Yamasaki S."/>
            <person name="Binz T."/>
            <person name="Niemann H."/>
            <person name="Jahn R."/>
        </authorList>
    </citation>
    <scope>FUNCTION</scope>
    <scope>PROTEOLYTIC CLEAVAGE (MICROBIAL INFECTION) BY C.BOTULINUM NEUROTOXIN TYPE C</scope>
</reference>
<reference key="5">
    <citation type="journal article" date="1995" name="J. Biol. Chem.">
        <title>Botulinum neurotoxin type C cleaves a single Lys-Ala bond within the carboxyl-terminal region of syntaxins.</title>
        <authorList>
            <person name="Schiavo G."/>
            <person name="Shone C.C."/>
            <person name="Bennett M.K."/>
            <person name="Scheller R.H."/>
            <person name="Montecucco C."/>
        </authorList>
    </citation>
    <scope>FUNCTION</scope>
    <scope>PROTEOLYTIC CLEAVAGE (MICROBIAL INFECTION) BY C.BOTULINUM NEUROTOXIN TYPE C</scope>
</reference>
<reference key="6">
    <citation type="journal article" date="2003" name="Nat. Biotechnol.">
        <title>A method for the comprehensive proteomic analysis of membrane proteins.</title>
        <authorList>
            <person name="Wu C.C."/>
            <person name="MacCoss M.J."/>
            <person name="Howell K.E."/>
            <person name="Yates J.R. III"/>
        </authorList>
    </citation>
    <scope>PHOSPHORYLATION AT SER-14</scope>
</reference>
<reference key="7">
    <citation type="journal article" date="2012" name="Nat. Commun.">
        <title>Quantitative maps of protein phosphorylation sites across 14 different rat organs and tissues.</title>
        <authorList>
            <person name="Lundby A."/>
            <person name="Secher A."/>
            <person name="Lage K."/>
            <person name="Nordsborg N.B."/>
            <person name="Dmytriyev A."/>
            <person name="Lundby C."/>
            <person name="Olsen J.V."/>
        </authorList>
    </citation>
    <scope>PHOSPHORYLATION [LARGE SCALE ANALYSIS] AT SER-14</scope>
    <scope>IDENTIFICATION BY MASS SPECTROMETRY [LARGE SCALE ANALYSIS]</scope>
</reference>
<dbReference type="EMBL" id="M95735">
    <property type="protein sequence ID" value="AAA42197.1"/>
    <property type="molecule type" value="mRNA"/>
</dbReference>
<dbReference type="PIR" id="B48213">
    <property type="entry name" value="B48213"/>
</dbReference>
<dbReference type="RefSeq" id="NP_036832.1">
    <property type="nucleotide sequence ID" value="NM_012700.2"/>
</dbReference>
<dbReference type="SMR" id="P61265"/>
<dbReference type="BioGRID" id="247029">
    <property type="interactions" value="5"/>
</dbReference>
<dbReference type="CORUM" id="P61265"/>
<dbReference type="FunCoup" id="P61265">
    <property type="interactions" value="796"/>
</dbReference>
<dbReference type="IntAct" id="P61265">
    <property type="interactions" value="3"/>
</dbReference>
<dbReference type="MINT" id="P61265"/>
<dbReference type="STRING" id="10116.ENSRNOP00000026063"/>
<dbReference type="iPTMnet" id="P61265"/>
<dbReference type="PhosphoSitePlus" id="P61265"/>
<dbReference type="SwissPalm" id="P61265"/>
<dbReference type="jPOST" id="P61265"/>
<dbReference type="PaxDb" id="10116-ENSRNOP00000026063"/>
<dbReference type="Ensembl" id="ENSRNOT00000026063.5">
    <property type="protein sequence ID" value="ENSRNOP00000026063.2"/>
    <property type="gene ID" value="ENSRNOG00000019193.5"/>
</dbReference>
<dbReference type="GeneID" id="24923"/>
<dbReference type="KEGG" id="rno:24923"/>
<dbReference type="UCSC" id="RGD:3784">
    <property type="organism name" value="rat"/>
</dbReference>
<dbReference type="AGR" id="RGD:3784"/>
<dbReference type="CTD" id="112755"/>
<dbReference type="RGD" id="3784">
    <property type="gene designation" value="Stx1b"/>
</dbReference>
<dbReference type="eggNOG" id="KOG0810">
    <property type="taxonomic scope" value="Eukaryota"/>
</dbReference>
<dbReference type="GeneTree" id="ENSGT01030000234627"/>
<dbReference type="HOGENOM" id="CLU_042423_2_2_1"/>
<dbReference type="InParanoid" id="P61265"/>
<dbReference type="OrthoDB" id="54189at9989"/>
<dbReference type="PhylomeDB" id="P61265"/>
<dbReference type="TreeFam" id="TF313763"/>
<dbReference type="Reactome" id="R-RNO-5682910">
    <property type="pathway name" value="LGI-ADAM interactions"/>
</dbReference>
<dbReference type="PRO" id="PR:P61265"/>
<dbReference type="Proteomes" id="UP000002494">
    <property type="component" value="Chromosome 1"/>
</dbReference>
<dbReference type="Bgee" id="ENSRNOG00000019193">
    <property type="expression patterns" value="Expressed in frontal cortex and 15 other cell types or tissues"/>
</dbReference>
<dbReference type="GO" id="GO:0030424">
    <property type="term" value="C:axon"/>
    <property type="evidence" value="ECO:0000266"/>
    <property type="project" value="RGD"/>
</dbReference>
<dbReference type="GO" id="GO:0012505">
    <property type="term" value="C:endomembrane system"/>
    <property type="evidence" value="ECO:0000318"/>
    <property type="project" value="GO_Central"/>
</dbReference>
<dbReference type="GO" id="GO:0016020">
    <property type="term" value="C:membrane"/>
    <property type="evidence" value="ECO:0000250"/>
    <property type="project" value="ParkinsonsUK-UCL"/>
</dbReference>
<dbReference type="GO" id="GO:0031594">
    <property type="term" value="C:neuromuscular junction"/>
    <property type="evidence" value="ECO:0000266"/>
    <property type="project" value="RGD"/>
</dbReference>
<dbReference type="GO" id="GO:0005886">
    <property type="term" value="C:plasma membrane"/>
    <property type="evidence" value="ECO:0000250"/>
    <property type="project" value="ParkinsonsUK-UCL"/>
</dbReference>
<dbReference type="GO" id="GO:0098793">
    <property type="term" value="C:presynapse"/>
    <property type="evidence" value="ECO:0000266"/>
    <property type="project" value="RGD"/>
</dbReference>
<dbReference type="GO" id="GO:0048787">
    <property type="term" value="C:presynaptic active zone membrane"/>
    <property type="evidence" value="ECO:0000266"/>
    <property type="project" value="RGD"/>
</dbReference>
<dbReference type="GO" id="GO:0042734">
    <property type="term" value="C:presynaptic membrane"/>
    <property type="evidence" value="ECO:0000314"/>
    <property type="project" value="ParkinsonsUK-UCL"/>
</dbReference>
<dbReference type="GO" id="GO:0031201">
    <property type="term" value="C:SNARE complex"/>
    <property type="evidence" value="ECO:0000318"/>
    <property type="project" value="GO_Central"/>
</dbReference>
<dbReference type="GO" id="GO:0019904">
    <property type="term" value="F:protein domain specific binding"/>
    <property type="evidence" value="ECO:0000353"/>
    <property type="project" value="RGD"/>
</dbReference>
<dbReference type="GO" id="GO:0019901">
    <property type="term" value="F:protein kinase binding"/>
    <property type="evidence" value="ECO:0000266"/>
    <property type="project" value="RGD"/>
</dbReference>
<dbReference type="GO" id="GO:0005102">
    <property type="term" value="F:signaling receptor binding"/>
    <property type="evidence" value="ECO:0000353"/>
    <property type="project" value="ParkinsonsUK-UCL"/>
</dbReference>
<dbReference type="GO" id="GO:0005484">
    <property type="term" value="F:SNAP receptor activity"/>
    <property type="evidence" value="ECO:0000318"/>
    <property type="project" value="GO_Central"/>
</dbReference>
<dbReference type="GO" id="GO:0000149">
    <property type="term" value="F:SNARE binding"/>
    <property type="evidence" value="ECO:0000318"/>
    <property type="project" value="GO_Central"/>
</dbReference>
<dbReference type="GO" id="GO:0048791">
    <property type="term" value="P:calcium ion-regulated exocytosis of neurotransmitter"/>
    <property type="evidence" value="ECO:0000266"/>
    <property type="project" value="RGD"/>
</dbReference>
<dbReference type="GO" id="GO:0006887">
    <property type="term" value="P:exocytosis"/>
    <property type="evidence" value="ECO:0000318"/>
    <property type="project" value="GO_Central"/>
</dbReference>
<dbReference type="GO" id="GO:0006886">
    <property type="term" value="P:intracellular protein transport"/>
    <property type="evidence" value="ECO:0000318"/>
    <property type="project" value="GO_Central"/>
</dbReference>
<dbReference type="GO" id="GO:1905302">
    <property type="term" value="P:negative regulation of macropinocytosis"/>
    <property type="evidence" value="ECO:0000250"/>
    <property type="project" value="ParkinsonsUK-UCL"/>
</dbReference>
<dbReference type="GO" id="GO:0010977">
    <property type="term" value="P:negative regulation of neuron projection development"/>
    <property type="evidence" value="ECO:0000250"/>
    <property type="project" value="ParkinsonsUK-UCL"/>
</dbReference>
<dbReference type="GO" id="GO:1903422">
    <property type="term" value="P:negative regulation of synaptic vesicle recycling"/>
    <property type="evidence" value="ECO:0000266"/>
    <property type="project" value="RGD"/>
</dbReference>
<dbReference type="GO" id="GO:2000463">
    <property type="term" value="P:positive regulation of excitatory postsynaptic potential"/>
    <property type="evidence" value="ECO:0000250"/>
    <property type="project" value="ParkinsonsUK-UCL"/>
</dbReference>
<dbReference type="GO" id="GO:0001956">
    <property type="term" value="P:positive regulation of neurotransmitter secretion"/>
    <property type="evidence" value="ECO:0000250"/>
    <property type="project" value="ParkinsonsUK-UCL"/>
</dbReference>
<dbReference type="GO" id="GO:1904050">
    <property type="term" value="P:positive regulation of spontaneous neurotransmitter secretion"/>
    <property type="evidence" value="ECO:0000266"/>
    <property type="project" value="RGD"/>
</dbReference>
<dbReference type="GO" id="GO:0072657">
    <property type="term" value="P:protein localization to membrane"/>
    <property type="evidence" value="ECO:0000314"/>
    <property type="project" value="ParkinsonsUK-UCL"/>
</dbReference>
<dbReference type="GO" id="GO:0017157">
    <property type="term" value="P:regulation of exocytosis"/>
    <property type="evidence" value="ECO:0000315"/>
    <property type="project" value="RGD"/>
</dbReference>
<dbReference type="GO" id="GO:0010468">
    <property type="term" value="P:regulation of gene expression"/>
    <property type="evidence" value="ECO:0000250"/>
    <property type="project" value="ParkinsonsUK-UCL"/>
</dbReference>
<dbReference type="GO" id="GO:0060025">
    <property type="term" value="P:regulation of synaptic activity"/>
    <property type="evidence" value="ECO:0000250"/>
    <property type="project" value="ParkinsonsUK-UCL"/>
</dbReference>
<dbReference type="GO" id="GO:0010807">
    <property type="term" value="P:regulation of synaptic vesicle priming"/>
    <property type="evidence" value="ECO:0000250"/>
    <property type="project" value="ParkinsonsUK-UCL"/>
</dbReference>
<dbReference type="GO" id="GO:0061669">
    <property type="term" value="P:spontaneous neurotransmitter secretion"/>
    <property type="evidence" value="ECO:0000266"/>
    <property type="project" value="RGD"/>
</dbReference>
<dbReference type="GO" id="GO:0016081">
    <property type="term" value="P:synaptic vesicle docking"/>
    <property type="evidence" value="ECO:0000250"/>
    <property type="project" value="ParkinsonsUK-UCL"/>
</dbReference>
<dbReference type="GO" id="GO:0016079">
    <property type="term" value="P:synaptic vesicle exocytosis"/>
    <property type="evidence" value="ECO:0000266"/>
    <property type="project" value="RGD"/>
</dbReference>
<dbReference type="GO" id="GO:0031629">
    <property type="term" value="P:synaptic vesicle fusion to presynaptic active zone membrane"/>
    <property type="evidence" value="ECO:0000266"/>
    <property type="project" value="RGD"/>
</dbReference>
<dbReference type="GO" id="GO:0048278">
    <property type="term" value="P:vesicle docking"/>
    <property type="evidence" value="ECO:0000318"/>
    <property type="project" value="GO_Central"/>
</dbReference>
<dbReference type="GO" id="GO:0006904">
    <property type="term" value="P:vesicle docking involved in exocytosis"/>
    <property type="evidence" value="ECO:0000250"/>
    <property type="project" value="ParkinsonsUK-UCL"/>
</dbReference>
<dbReference type="GO" id="GO:0016192">
    <property type="term" value="P:vesicle-mediated transport"/>
    <property type="evidence" value="ECO:0000315"/>
    <property type="project" value="RGD"/>
</dbReference>
<dbReference type="CDD" id="cd15880">
    <property type="entry name" value="SNARE_syntaxin1"/>
    <property type="match status" value="1"/>
</dbReference>
<dbReference type="CDD" id="cd00179">
    <property type="entry name" value="SynN"/>
    <property type="match status" value="1"/>
</dbReference>
<dbReference type="FunFam" id="1.20.58.70:FF:000042">
    <property type="entry name" value="Syntaxin 11b, tandem duplicate 2"/>
    <property type="match status" value="1"/>
</dbReference>
<dbReference type="FunFam" id="1.20.5.110:FF:000005">
    <property type="entry name" value="Syntaxin 1B"/>
    <property type="match status" value="1"/>
</dbReference>
<dbReference type="Gene3D" id="1.20.5.110">
    <property type="match status" value="1"/>
</dbReference>
<dbReference type="Gene3D" id="1.20.58.70">
    <property type="match status" value="1"/>
</dbReference>
<dbReference type="InterPro" id="IPR010989">
    <property type="entry name" value="SNARE"/>
</dbReference>
<dbReference type="InterPro" id="IPR045242">
    <property type="entry name" value="Syntaxin"/>
</dbReference>
<dbReference type="InterPro" id="IPR006012">
    <property type="entry name" value="Syntaxin/epimorphin_CS"/>
</dbReference>
<dbReference type="InterPro" id="IPR006011">
    <property type="entry name" value="Syntaxin_N"/>
</dbReference>
<dbReference type="InterPro" id="IPR000727">
    <property type="entry name" value="T_SNARE_dom"/>
</dbReference>
<dbReference type="PANTHER" id="PTHR19957">
    <property type="entry name" value="SYNTAXIN"/>
    <property type="match status" value="1"/>
</dbReference>
<dbReference type="PANTHER" id="PTHR19957:SF334">
    <property type="entry name" value="SYNTAXIN-1B"/>
    <property type="match status" value="1"/>
</dbReference>
<dbReference type="Pfam" id="PF05739">
    <property type="entry name" value="SNARE"/>
    <property type="match status" value="1"/>
</dbReference>
<dbReference type="Pfam" id="PF00804">
    <property type="entry name" value="Syntaxin"/>
    <property type="match status" value="1"/>
</dbReference>
<dbReference type="SMART" id="SM00503">
    <property type="entry name" value="SynN"/>
    <property type="match status" value="1"/>
</dbReference>
<dbReference type="SMART" id="SM00397">
    <property type="entry name" value="t_SNARE"/>
    <property type="match status" value="1"/>
</dbReference>
<dbReference type="SUPFAM" id="SSF47661">
    <property type="entry name" value="t-snare proteins"/>
    <property type="match status" value="1"/>
</dbReference>
<dbReference type="PROSITE" id="PS00914">
    <property type="entry name" value="SYNTAXIN"/>
    <property type="match status" value="1"/>
</dbReference>
<dbReference type="PROSITE" id="PS50192">
    <property type="entry name" value="T_SNARE"/>
    <property type="match status" value="1"/>
</dbReference>
<protein>
    <recommendedName>
        <fullName>Syntaxin-1B</fullName>
    </recommendedName>
    <alternativeName>
        <fullName>P35B</fullName>
    </alternativeName>
    <alternativeName>
        <fullName>Syntaxin-1B2</fullName>
    </alternativeName>
</protein>
<evidence type="ECO:0000250" key="1"/>
<evidence type="ECO:0000250" key="2">
    <source>
        <dbReference type="UniProtKB" id="P61264"/>
    </source>
</evidence>
<evidence type="ECO:0000255" key="3"/>
<evidence type="ECO:0000255" key="4">
    <source>
        <dbReference type="PROSITE-ProRule" id="PRU00202"/>
    </source>
</evidence>
<evidence type="ECO:0000256" key="5">
    <source>
        <dbReference type="SAM" id="MobiDB-lite"/>
    </source>
</evidence>
<evidence type="ECO:0000269" key="6">
    <source>
    </source>
</evidence>
<evidence type="ECO:0000269" key="7">
    <source>
    </source>
</evidence>
<evidence type="ECO:0000269" key="8">
    <source>
    </source>
</evidence>
<evidence type="ECO:0000305" key="9"/>
<evidence type="ECO:0000305" key="10">
    <source>
    </source>
</evidence>
<evidence type="ECO:0007744" key="11">
    <source>
    </source>
</evidence>
<organism>
    <name type="scientific">Rattus norvegicus</name>
    <name type="common">Rat</name>
    <dbReference type="NCBI Taxonomy" id="10116"/>
    <lineage>
        <taxon>Eukaryota</taxon>
        <taxon>Metazoa</taxon>
        <taxon>Chordata</taxon>
        <taxon>Craniata</taxon>
        <taxon>Vertebrata</taxon>
        <taxon>Euteleostomi</taxon>
        <taxon>Mammalia</taxon>
        <taxon>Eutheria</taxon>
        <taxon>Euarchontoglires</taxon>
        <taxon>Glires</taxon>
        <taxon>Rodentia</taxon>
        <taxon>Myomorpha</taxon>
        <taxon>Muroidea</taxon>
        <taxon>Muridae</taxon>
        <taxon>Murinae</taxon>
        <taxon>Rattus</taxon>
    </lineage>
</organism>
<name>STX1B_RAT</name>
<proteinExistence type="evidence at protein level"/>
<gene>
    <name type="primary">Stx1b</name>
    <name type="synonym">Stx1b2</name>
</gene>
<sequence>MKDRTQELRSAKDSDDEEEVVHVDRDHFMDEFFEQVEEIRGCIEKLSEDVEQVKKQHSAILAAPNPDEKTKQELEDLTADIKKTANKVRSKLKAIEQSIEQEEGLNRSSADLRIRKTQHSTLSRKFVEVMTEYNATQSKYRDRCKDRIQRQLEITGRTTTNEELEDMLESGKLAIFTDDIKMDSQMTKQALNEIETRHNEIIKLETSIRELHDMFVDMAMLVESQGEMIDRIEYNVEHSVDYVERAVSDTKKAVKYQSKARRKKIMIIICCVVLGVVLASSIGGTLGL</sequence>
<accession>P61265</accession>
<accession>P32853</accession>
<feature type="chain" id="PRO_0000210194" description="Syntaxin-1B">
    <location>
        <begin position="1"/>
        <end position="288"/>
    </location>
</feature>
<feature type="topological domain" description="Cytoplasmic" evidence="3">
    <location>
        <begin position="1"/>
        <end position="264"/>
    </location>
</feature>
<feature type="transmembrane region" description="Helical; Anchor for type IV membrane protein" evidence="3">
    <location>
        <begin position="265"/>
        <end position="288"/>
    </location>
</feature>
<feature type="domain" description="t-SNARE coiled-coil homology" evidence="4">
    <location>
        <begin position="191"/>
        <end position="253"/>
    </location>
</feature>
<feature type="region of interest" description="Disordered" evidence="5">
    <location>
        <begin position="1"/>
        <end position="20"/>
    </location>
</feature>
<feature type="coiled-coil region" evidence="3">
    <location>
        <begin position="29"/>
        <end position="104"/>
    </location>
</feature>
<feature type="compositionally biased region" description="Basic and acidic residues" evidence="5">
    <location>
        <begin position="1"/>
        <end position="13"/>
    </location>
</feature>
<feature type="site" description="(Microbial infection) Cleavage; by C.botulinum neurotoxin type C (BoNT/C)" evidence="7">
    <location>
        <begin position="252"/>
        <end position="253"/>
    </location>
</feature>
<feature type="modified residue" description="Phosphoserine" evidence="2">
    <location>
        <position position="10"/>
    </location>
</feature>
<feature type="modified residue" description="Phosphoserine" evidence="6 11">
    <location>
        <position position="14"/>
    </location>
</feature>
<comment type="function">
    <text evidence="1 10">Potentially involved in docking of synaptic vesicles at presynaptic active zones (PubMed:7901002). May mediate Ca(2+)-regulation of exocytosis acrosomal reaction in sperm (By similarity).</text>
</comment>
<comment type="subunit">
    <text evidence="1">Interacts with OTOF. Interacts with SYT6 and SYT8; the interaction is Ca(2+)-dependent (By similarity).</text>
</comment>
<comment type="interaction">
    <interactant intactId="EBI-2255905">
        <id>P61265</id>
    </interactant>
    <interactant intactId="EBI-6110162">
        <id>Q8CJB9</id>
        <label>Rnf40</label>
    </interactant>
    <organismsDiffer>false</organismsDiffer>
    <experiments>4</experiments>
</comment>
<comment type="subcellular location">
    <subcellularLocation>
        <location evidence="9">Membrane</location>
        <topology evidence="9">Single-pass type IV membrane protein</topology>
    </subcellularLocation>
</comment>
<comment type="tissue specificity">
    <text>Cerebral cortex, hippocampus, cerebellum, and adrenal medulla.</text>
</comment>
<comment type="PTM">
    <text evidence="6">Phosphorylated by CK2.</text>
</comment>
<comment type="PTM">
    <text evidence="7 8">(Microbial infection) Targeted and hydrolyzed by C.botulinum neurotoxin type C (BoNT/C), which hydrolyzes the 252-Lys-|-Ala-253 bond (PubMed:7737992). Cleavage inhibits neurotransmitter release (PubMed:7901002).</text>
</comment>
<comment type="similarity">
    <text evidence="9">Belongs to the syntaxin family.</text>
</comment>
<keyword id="KW-0175">Coiled coil</keyword>
<keyword id="KW-0903">Direct protein sequencing</keyword>
<keyword id="KW-0472">Membrane</keyword>
<keyword id="KW-0532">Neurotransmitter transport</keyword>
<keyword id="KW-0597">Phosphoprotein</keyword>
<keyword id="KW-1185">Reference proteome</keyword>
<keyword id="KW-0812">Transmembrane</keyword>
<keyword id="KW-1133">Transmembrane helix</keyword>
<keyword id="KW-0813">Transport</keyword>